<keyword id="KW-0067">ATP-binding</keyword>
<keyword id="KW-0997">Cell inner membrane</keyword>
<keyword id="KW-1003">Cell membrane</keyword>
<keyword id="KW-0406">Ion transport</keyword>
<keyword id="KW-0472">Membrane</keyword>
<keyword id="KW-0547">Nucleotide-binding</keyword>
<keyword id="KW-1278">Translocase</keyword>
<keyword id="KW-0813">Transport</keyword>
<accession>Q5MZ53</accession>
<reference key="1">
    <citation type="journal article" date="2007" name="Photosyn. Res.">
        <title>Complete nucleotide sequence of the freshwater unicellular cyanobacterium Synechococcus elongatus PCC 6301 chromosome: gene content and organization.</title>
        <authorList>
            <person name="Sugita C."/>
            <person name="Ogata K."/>
            <person name="Shikata M."/>
            <person name="Jikuya H."/>
            <person name="Takano J."/>
            <person name="Furumichi M."/>
            <person name="Kanehisa M."/>
            <person name="Omata T."/>
            <person name="Sugiura M."/>
            <person name="Sugita M."/>
        </authorList>
    </citation>
    <scope>NUCLEOTIDE SEQUENCE [LARGE SCALE GENOMIC DNA]</scope>
    <source>
        <strain>ATCC 27144 / PCC 6301 / SAUG 1402/1</strain>
    </source>
</reference>
<protein>
    <recommendedName>
        <fullName>Bicarbonate transport ATP-binding protein CmpD</fullName>
        <ecNumber>7.6.2.-</ecNumber>
    </recommendedName>
</protein>
<gene>
    <name type="primary">cmpD</name>
    <name type="ordered locus">syc2477_d</name>
</gene>
<organism>
    <name type="scientific">Synechococcus sp. (strain ATCC 27144 / PCC 6301 / SAUG 1402/1)</name>
    <name type="common">Anacystis nidulans</name>
    <dbReference type="NCBI Taxonomy" id="269084"/>
    <lineage>
        <taxon>Bacteria</taxon>
        <taxon>Bacillati</taxon>
        <taxon>Cyanobacteriota</taxon>
        <taxon>Cyanophyceae</taxon>
        <taxon>Synechococcales</taxon>
        <taxon>Synechococcaceae</taxon>
        <taxon>Synechococcus</taxon>
    </lineage>
</organism>
<proteinExistence type="inferred from homology"/>
<feature type="chain" id="PRO_0000341958" description="Bicarbonate transport ATP-binding protein CmpD">
    <location>
        <begin position="1"/>
        <end position="278"/>
    </location>
</feature>
<feature type="domain" description="ABC transporter" evidence="2">
    <location>
        <begin position="21"/>
        <end position="254"/>
    </location>
</feature>
<feature type="binding site" evidence="2">
    <location>
        <begin position="57"/>
        <end position="64"/>
    </location>
    <ligand>
        <name>ATP</name>
        <dbReference type="ChEBI" id="CHEBI:30616"/>
    </ligand>
</feature>
<comment type="function">
    <text evidence="1">Part of the ABC transporter complex CmpABCD involved in bicarbonate transport. Responsible for energy coupling to the transport system (By similarity).</text>
</comment>
<comment type="subunit">
    <text evidence="1">The complex is composed of two ATP-binding proteins (CmpC and CmpD), a transmembrane protein (CmpB) and a solute-binding protein (CmpA).</text>
</comment>
<comment type="subcellular location">
    <subcellularLocation>
        <location evidence="3">Cell inner membrane</location>
        <topology evidence="3">Peripheral membrane protein</topology>
    </subcellularLocation>
</comment>
<comment type="induction">
    <text evidence="1">By carbon dioxide-limited conditions, probably via CmpR.</text>
</comment>
<comment type="similarity">
    <text evidence="3">Belongs to the ABC transporter superfamily. Nitrate/nitrite/cyanate uptake transporter (NitT) (TC 3.A.1.16) family.</text>
</comment>
<name>CMPD_SYNP6</name>
<sequence>MQTLRQQQPIVPSSPGHDPFLIVENVSKIYETPKGPYTVLDGVNLTVQEGEFICVIGHSGCGKSTLLNMVSGFNQPSHGSVRLKGKEIDRPGPDRMVVFQNYALLPWMTAYENVYLAVDCVNPQMREGEKREIVREHLAMVGLTEAAEKKITQISGGMKQRVAIARALSIRPEVLILDEPFGALDAITKEELQEELLKIWNDHRCTVLMITHDIDEALFLADRLVMMTNGPAANIGEIMTIPFPRPRDRERIMEDPQYYDLRNYALDFLYNRFAHDDE</sequence>
<evidence type="ECO:0000250" key="1"/>
<evidence type="ECO:0000255" key="2">
    <source>
        <dbReference type="PROSITE-ProRule" id="PRU00434"/>
    </source>
</evidence>
<evidence type="ECO:0000305" key="3"/>
<dbReference type="EC" id="7.6.2.-"/>
<dbReference type="EMBL" id="AP008231">
    <property type="protein sequence ID" value="BAD80667.1"/>
    <property type="molecule type" value="Genomic_DNA"/>
</dbReference>
<dbReference type="RefSeq" id="WP_011244787.1">
    <property type="nucleotide sequence ID" value="NZ_CP085785.1"/>
</dbReference>
<dbReference type="SMR" id="Q5MZ53"/>
<dbReference type="KEGG" id="syc:syc2477_d"/>
<dbReference type="eggNOG" id="COG1116">
    <property type="taxonomic scope" value="Bacteria"/>
</dbReference>
<dbReference type="Proteomes" id="UP000001175">
    <property type="component" value="Chromosome"/>
</dbReference>
<dbReference type="GO" id="GO:0005886">
    <property type="term" value="C:plasma membrane"/>
    <property type="evidence" value="ECO:0007669"/>
    <property type="project" value="UniProtKB-SubCell"/>
</dbReference>
<dbReference type="GO" id="GO:0005524">
    <property type="term" value="F:ATP binding"/>
    <property type="evidence" value="ECO:0007669"/>
    <property type="project" value="UniProtKB-KW"/>
</dbReference>
<dbReference type="GO" id="GO:0016887">
    <property type="term" value="F:ATP hydrolysis activity"/>
    <property type="evidence" value="ECO:0007669"/>
    <property type="project" value="InterPro"/>
</dbReference>
<dbReference type="GO" id="GO:0015112">
    <property type="term" value="F:nitrate transmembrane transporter activity"/>
    <property type="evidence" value="ECO:0007669"/>
    <property type="project" value="InterPro"/>
</dbReference>
<dbReference type="GO" id="GO:0006811">
    <property type="term" value="P:monoatomic ion transport"/>
    <property type="evidence" value="ECO:0007669"/>
    <property type="project" value="UniProtKB-KW"/>
</dbReference>
<dbReference type="CDD" id="cd03293">
    <property type="entry name" value="ABC_NrtD_SsuB_transporters"/>
    <property type="match status" value="1"/>
</dbReference>
<dbReference type="Gene3D" id="3.40.50.300">
    <property type="entry name" value="P-loop containing nucleotide triphosphate hydrolases"/>
    <property type="match status" value="1"/>
</dbReference>
<dbReference type="InterPro" id="IPR003593">
    <property type="entry name" value="AAA+_ATPase"/>
</dbReference>
<dbReference type="InterPro" id="IPR003439">
    <property type="entry name" value="ABC_transporter-like_ATP-bd"/>
</dbReference>
<dbReference type="InterPro" id="IPR017871">
    <property type="entry name" value="ABC_transporter-like_CS"/>
</dbReference>
<dbReference type="InterPro" id="IPR050166">
    <property type="entry name" value="ABC_transporter_ATP-bind"/>
</dbReference>
<dbReference type="InterPro" id="IPR005890">
    <property type="entry name" value="NO3_transporter_ATP-bd-like"/>
</dbReference>
<dbReference type="InterPro" id="IPR027417">
    <property type="entry name" value="P-loop_NTPase"/>
</dbReference>
<dbReference type="NCBIfam" id="TIGR01184">
    <property type="entry name" value="ntrCD"/>
    <property type="match status" value="1"/>
</dbReference>
<dbReference type="PANTHER" id="PTHR42788:SF7">
    <property type="entry name" value="NITRATE ABC TRANSPORTER ATP-BINDING PROTEIN"/>
    <property type="match status" value="1"/>
</dbReference>
<dbReference type="PANTHER" id="PTHR42788">
    <property type="entry name" value="TAURINE IMPORT ATP-BINDING PROTEIN-RELATED"/>
    <property type="match status" value="1"/>
</dbReference>
<dbReference type="Pfam" id="PF00005">
    <property type="entry name" value="ABC_tran"/>
    <property type="match status" value="1"/>
</dbReference>
<dbReference type="SMART" id="SM00382">
    <property type="entry name" value="AAA"/>
    <property type="match status" value="1"/>
</dbReference>
<dbReference type="SUPFAM" id="SSF52540">
    <property type="entry name" value="P-loop containing nucleoside triphosphate hydrolases"/>
    <property type="match status" value="1"/>
</dbReference>
<dbReference type="PROSITE" id="PS00211">
    <property type="entry name" value="ABC_TRANSPORTER_1"/>
    <property type="match status" value="1"/>
</dbReference>
<dbReference type="PROSITE" id="PS50893">
    <property type="entry name" value="ABC_TRANSPORTER_2"/>
    <property type="match status" value="1"/>
</dbReference>